<accession>P67563</accession>
<accession>Q8XGN9</accession>
<gene>
    <name evidence="1" type="primary">serS</name>
    <name type="ordered locus">STM0963</name>
</gene>
<organism>
    <name type="scientific">Salmonella typhimurium (strain LT2 / SGSC1412 / ATCC 700720)</name>
    <dbReference type="NCBI Taxonomy" id="99287"/>
    <lineage>
        <taxon>Bacteria</taxon>
        <taxon>Pseudomonadati</taxon>
        <taxon>Pseudomonadota</taxon>
        <taxon>Gammaproteobacteria</taxon>
        <taxon>Enterobacterales</taxon>
        <taxon>Enterobacteriaceae</taxon>
        <taxon>Salmonella</taxon>
    </lineage>
</organism>
<evidence type="ECO:0000255" key="1">
    <source>
        <dbReference type="HAMAP-Rule" id="MF_00176"/>
    </source>
</evidence>
<comment type="function">
    <text evidence="1">Catalyzes the attachment of serine to tRNA(Ser). Is also able to aminoacylate tRNA(Sec) with serine, to form the misacylated tRNA L-seryl-tRNA(Sec), which will be further converted into selenocysteinyl-tRNA(Sec).</text>
</comment>
<comment type="catalytic activity">
    <reaction evidence="1">
        <text>tRNA(Ser) + L-serine + ATP = L-seryl-tRNA(Ser) + AMP + diphosphate + H(+)</text>
        <dbReference type="Rhea" id="RHEA:12292"/>
        <dbReference type="Rhea" id="RHEA-COMP:9669"/>
        <dbReference type="Rhea" id="RHEA-COMP:9703"/>
        <dbReference type="ChEBI" id="CHEBI:15378"/>
        <dbReference type="ChEBI" id="CHEBI:30616"/>
        <dbReference type="ChEBI" id="CHEBI:33019"/>
        <dbReference type="ChEBI" id="CHEBI:33384"/>
        <dbReference type="ChEBI" id="CHEBI:78442"/>
        <dbReference type="ChEBI" id="CHEBI:78533"/>
        <dbReference type="ChEBI" id="CHEBI:456215"/>
        <dbReference type="EC" id="6.1.1.11"/>
    </reaction>
</comment>
<comment type="catalytic activity">
    <reaction evidence="1">
        <text>tRNA(Sec) + L-serine + ATP = L-seryl-tRNA(Sec) + AMP + diphosphate + H(+)</text>
        <dbReference type="Rhea" id="RHEA:42580"/>
        <dbReference type="Rhea" id="RHEA-COMP:9742"/>
        <dbReference type="Rhea" id="RHEA-COMP:10128"/>
        <dbReference type="ChEBI" id="CHEBI:15378"/>
        <dbReference type="ChEBI" id="CHEBI:30616"/>
        <dbReference type="ChEBI" id="CHEBI:33019"/>
        <dbReference type="ChEBI" id="CHEBI:33384"/>
        <dbReference type="ChEBI" id="CHEBI:78442"/>
        <dbReference type="ChEBI" id="CHEBI:78533"/>
        <dbReference type="ChEBI" id="CHEBI:456215"/>
        <dbReference type="EC" id="6.1.1.11"/>
    </reaction>
</comment>
<comment type="pathway">
    <text evidence="1">Aminoacyl-tRNA biosynthesis; selenocysteinyl-tRNA(Sec) biosynthesis; L-seryl-tRNA(Sec) from L-serine and tRNA(Sec): step 1/1.</text>
</comment>
<comment type="subunit">
    <text evidence="1">Homodimer. The tRNA molecule binds across the dimer.</text>
</comment>
<comment type="subcellular location">
    <subcellularLocation>
        <location evidence="1">Cytoplasm</location>
    </subcellularLocation>
</comment>
<comment type="domain">
    <text evidence="1">Consists of two distinct domains, a catalytic core and a N-terminal extension that is involved in tRNA binding.</text>
</comment>
<comment type="similarity">
    <text evidence="1">Belongs to the class-II aminoacyl-tRNA synthetase family. Type-1 seryl-tRNA synthetase subfamily.</text>
</comment>
<proteinExistence type="inferred from homology"/>
<sequence>MLDPNLLRNEPDAVAEKLARRGFKLDVDKLRALEERRKVLQVNTENLQAERNSRSKSIGQAKARGEDIEPLRLEVNKLGEELDAAKAELDTLLAEIRDIALTIPNLPADEVPVGKDENDNVEVSRWGTPREFDFEIRDHVTLGEMHSGLDFAAAVKLTGSRFVVMKGQIARMHRALSQFMLDLHTEQHGYSENYVPYLVNHDTLYGTGQLPKFAGDLFHTRPLEEEADSSNYALIPTAEVPLTNLVRDEIIDEDQLPIKMTAHTPCFRSEAGSYGRDTRGLIRMHQFDKVEMVQIVRPEDSMAALEEMTGHAEKVLQLLGLPYRKIILCTGDMGFGACKTYDLEVWVPAQNTYREISSCSNVWDFQARRMQARCRSKSDKKTRLVHTLNGSGLAVGRTLVAVMENYQQADGRIEVPEVLRPYMNGLEYIG</sequence>
<keyword id="KW-0030">Aminoacyl-tRNA synthetase</keyword>
<keyword id="KW-0067">ATP-binding</keyword>
<keyword id="KW-0963">Cytoplasm</keyword>
<keyword id="KW-0436">Ligase</keyword>
<keyword id="KW-0547">Nucleotide-binding</keyword>
<keyword id="KW-0648">Protein biosynthesis</keyword>
<keyword id="KW-1185">Reference proteome</keyword>
<reference key="1">
    <citation type="journal article" date="2001" name="Nature">
        <title>Complete genome sequence of Salmonella enterica serovar Typhimurium LT2.</title>
        <authorList>
            <person name="McClelland M."/>
            <person name="Sanderson K.E."/>
            <person name="Spieth J."/>
            <person name="Clifton S.W."/>
            <person name="Latreille P."/>
            <person name="Courtney L."/>
            <person name="Porwollik S."/>
            <person name="Ali J."/>
            <person name="Dante M."/>
            <person name="Du F."/>
            <person name="Hou S."/>
            <person name="Layman D."/>
            <person name="Leonard S."/>
            <person name="Nguyen C."/>
            <person name="Scott K."/>
            <person name="Holmes A."/>
            <person name="Grewal N."/>
            <person name="Mulvaney E."/>
            <person name="Ryan E."/>
            <person name="Sun H."/>
            <person name="Florea L."/>
            <person name="Miller W."/>
            <person name="Stoneking T."/>
            <person name="Nhan M."/>
            <person name="Waterston R."/>
            <person name="Wilson R.K."/>
        </authorList>
    </citation>
    <scope>NUCLEOTIDE SEQUENCE [LARGE SCALE GENOMIC DNA]</scope>
    <source>
        <strain>LT2 / SGSC1412 / ATCC 700720</strain>
    </source>
</reference>
<dbReference type="EC" id="6.1.1.11" evidence="1"/>
<dbReference type="EMBL" id="AE006468">
    <property type="protein sequence ID" value="AAL19898.1"/>
    <property type="molecule type" value="Genomic_DNA"/>
</dbReference>
<dbReference type="RefSeq" id="NP_459939.1">
    <property type="nucleotide sequence ID" value="NC_003197.2"/>
</dbReference>
<dbReference type="RefSeq" id="WP_000886697.1">
    <property type="nucleotide sequence ID" value="NC_003197.2"/>
</dbReference>
<dbReference type="SMR" id="P67563"/>
<dbReference type="STRING" id="99287.STM0963"/>
<dbReference type="PaxDb" id="99287-STM0963"/>
<dbReference type="GeneID" id="1252482"/>
<dbReference type="KEGG" id="stm:STM0963"/>
<dbReference type="PATRIC" id="fig|99287.12.peg.1015"/>
<dbReference type="HOGENOM" id="CLU_023797_1_1_6"/>
<dbReference type="OMA" id="GYTPCFR"/>
<dbReference type="PhylomeDB" id="P67563"/>
<dbReference type="BioCyc" id="SENT99287:STM0963-MONOMER"/>
<dbReference type="UniPathway" id="UPA00906">
    <property type="reaction ID" value="UER00895"/>
</dbReference>
<dbReference type="Proteomes" id="UP000001014">
    <property type="component" value="Chromosome"/>
</dbReference>
<dbReference type="GO" id="GO:0005737">
    <property type="term" value="C:cytoplasm"/>
    <property type="evidence" value="ECO:0007669"/>
    <property type="project" value="UniProtKB-SubCell"/>
</dbReference>
<dbReference type="GO" id="GO:0005524">
    <property type="term" value="F:ATP binding"/>
    <property type="evidence" value="ECO:0007669"/>
    <property type="project" value="UniProtKB-UniRule"/>
</dbReference>
<dbReference type="GO" id="GO:0004828">
    <property type="term" value="F:serine-tRNA ligase activity"/>
    <property type="evidence" value="ECO:0007669"/>
    <property type="project" value="UniProtKB-UniRule"/>
</dbReference>
<dbReference type="GO" id="GO:0016260">
    <property type="term" value="P:selenocysteine biosynthetic process"/>
    <property type="evidence" value="ECO:0007669"/>
    <property type="project" value="UniProtKB-UniRule"/>
</dbReference>
<dbReference type="GO" id="GO:0006434">
    <property type="term" value="P:seryl-tRNA aminoacylation"/>
    <property type="evidence" value="ECO:0007669"/>
    <property type="project" value="UniProtKB-UniRule"/>
</dbReference>
<dbReference type="CDD" id="cd00770">
    <property type="entry name" value="SerRS_core"/>
    <property type="match status" value="1"/>
</dbReference>
<dbReference type="FunFam" id="1.10.287.40:FF:000001">
    <property type="entry name" value="Serine--tRNA ligase"/>
    <property type="match status" value="1"/>
</dbReference>
<dbReference type="FunFam" id="3.30.930.10:FF:000018">
    <property type="entry name" value="Serine--tRNA ligase"/>
    <property type="match status" value="1"/>
</dbReference>
<dbReference type="Gene3D" id="3.30.930.10">
    <property type="entry name" value="Bira Bifunctional Protein, Domain 2"/>
    <property type="match status" value="1"/>
</dbReference>
<dbReference type="Gene3D" id="1.10.287.40">
    <property type="entry name" value="Serine-tRNA synthetase, tRNA binding domain"/>
    <property type="match status" value="1"/>
</dbReference>
<dbReference type="HAMAP" id="MF_00176">
    <property type="entry name" value="Ser_tRNA_synth_type1"/>
    <property type="match status" value="1"/>
</dbReference>
<dbReference type="InterPro" id="IPR002314">
    <property type="entry name" value="aa-tRNA-synt_IIb"/>
</dbReference>
<dbReference type="InterPro" id="IPR006195">
    <property type="entry name" value="aa-tRNA-synth_II"/>
</dbReference>
<dbReference type="InterPro" id="IPR045864">
    <property type="entry name" value="aa-tRNA-synth_II/BPL/LPL"/>
</dbReference>
<dbReference type="InterPro" id="IPR002317">
    <property type="entry name" value="Ser-tRNA-ligase_type_1"/>
</dbReference>
<dbReference type="InterPro" id="IPR015866">
    <property type="entry name" value="Ser-tRNA-synth_1_N"/>
</dbReference>
<dbReference type="InterPro" id="IPR042103">
    <property type="entry name" value="SerRS_1_N_sf"/>
</dbReference>
<dbReference type="InterPro" id="IPR033729">
    <property type="entry name" value="SerRS_core"/>
</dbReference>
<dbReference type="InterPro" id="IPR010978">
    <property type="entry name" value="tRNA-bd_arm"/>
</dbReference>
<dbReference type="NCBIfam" id="TIGR00414">
    <property type="entry name" value="serS"/>
    <property type="match status" value="1"/>
</dbReference>
<dbReference type="PANTHER" id="PTHR43697:SF1">
    <property type="entry name" value="SERINE--TRNA LIGASE"/>
    <property type="match status" value="1"/>
</dbReference>
<dbReference type="PANTHER" id="PTHR43697">
    <property type="entry name" value="SERYL-TRNA SYNTHETASE"/>
    <property type="match status" value="1"/>
</dbReference>
<dbReference type="Pfam" id="PF02403">
    <property type="entry name" value="Seryl_tRNA_N"/>
    <property type="match status" value="1"/>
</dbReference>
<dbReference type="Pfam" id="PF00587">
    <property type="entry name" value="tRNA-synt_2b"/>
    <property type="match status" value="1"/>
</dbReference>
<dbReference type="PIRSF" id="PIRSF001529">
    <property type="entry name" value="Ser-tRNA-synth_IIa"/>
    <property type="match status" value="1"/>
</dbReference>
<dbReference type="PRINTS" id="PR00981">
    <property type="entry name" value="TRNASYNTHSER"/>
</dbReference>
<dbReference type="SUPFAM" id="SSF55681">
    <property type="entry name" value="Class II aaRS and biotin synthetases"/>
    <property type="match status" value="1"/>
</dbReference>
<dbReference type="SUPFAM" id="SSF46589">
    <property type="entry name" value="tRNA-binding arm"/>
    <property type="match status" value="1"/>
</dbReference>
<dbReference type="PROSITE" id="PS50862">
    <property type="entry name" value="AA_TRNA_LIGASE_II"/>
    <property type="match status" value="1"/>
</dbReference>
<name>SYS_SALTY</name>
<protein>
    <recommendedName>
        <fullName evidence="1">Serine--tRNA ligase</fullName>
        <ecNumber evidence="1">6.1.1.11</ecNumber>
    </recommendedName>
    <alternativeName>
        <fullName evidence="1">Seryl-tRNA synthetase</fullName>
        <shortName evidence="1">SerRS</shortName>
    </alternativeName>
    <alternativeName>
        <fullName evidence="1">Seryl-tRNA(Ser/Sec) synthetase</fullName>
    </alternativeName>
</protein>
<feature type="chain" id="PRO_0000122114" description="Serine--tRNA ligase">
    <location>
        <begin position="1"/>
        <end position="430"/>
    </location>
</feature>
<feature type="binding site" evidence="1">
    <location>
        <begin position="237"/>
        <end position="239"/>
    </location>
    <ligand>
        <name>L-serine</name>
        <dbReference type="ChEBI" id="CHEBI:33384"/>
    </ligand>
</feature>
<feature type="binding site" evidence="1">
    <location>
        <begin position="268"/>
        <end position="270"/>
    </location>
    <ligand>
        <name>ATP</name>
        <dbReference type="ChEBI" id="CHEBI:30616"/>
    </ligand>
</feature>
<feature type="binding site" evidence="1">
    <location>
        <position position="291"/>
    </location>
    <ligand>
        <name>L-serine</name>
        <dbReference type="ChEBI" id="CHEBI:33384"/>
    </ligand>
</feature>
<feature type="binding site" evidence="1">
    <location>
        <begin position="355"/>
        <end position="358"/>
    </location>
    <ligand>
        <name>ATP</name>
        <dbReference type="ChEBI" id="CHEBI:30616"/>
    </ligand>
</feature>
<feature type="binding site" evidence="1">
    <location>
        <position position="391"/>
    </location>
    <ligand>
        <name>L-serine</name>
        <dbReference type="ChEBI" id="CHEBI:33384"/>
    </ligand>
</feature>